<proteinExistence type="evidence at protein level"/>
<dbReference type="EC" id="3.4.-.-" evidence="2"/>
<dbReference type="EMBL" id="AF317900">
    <property type="protein sequence ID" value="AAG37910.1"/>
    <property type="molecule type" value="mRNA"/>
</dbReference>
<dbReference type="EMBL" id="AF317901">
    <property type="protein sequence ID" value="AAG37911.1"/>
    <property type="molecule type" value="Genomic_DNA"/>
</dbReference>
<dbReference type="CCDS" id="CCDS40674.1"/>
<dbReference type="RefSeq" id="NP_109642.1">
    <property type="nucleotide sequence ID" value="NM_030717.2"/>
</dbReference>
<dbReference type="SMR" id="Q9EP89"/>
<dbReference type="BioGRID" id="219844">
    <property type="interactions" value="6"/>
</dbReference>
<dbReference type="FunCoup" id="Q9EP89">
    <property type="interactions" value="1315"/>
</dbReference>
<dbReference type="IntAct" id="Q9EP89">
    <property type="interactions" value="1"/>
</dbReference>
<dbReference type="STRING" id="10090.ENSMUSP00000034929"/>
<dbReference type="ChEMBL" id="CHEMBL3259498"/>
<dbReference type="MEROPS" id="S12.004"/>
<dbReference type="GlyGen" id="Q9EP89">
    <property type="glycosylation" value="1 site, 1 O-linked glycan (1 site)"/>
</dbReference>
<dbReference type="iPTMnet" id="Q9EP89"/>
<dbReference type="PhosphoSitePlus" id="Q9EP89"/>
<dbReference type="SwissPalm" id="Q9EP89"/>
<dbReference type="jPOST" id="Q9EP89"/>
<dbReference type="PaxDb" id="10090-ENSMUSP00000034929"/>
<dbReference type="ProteomicsDB" id="252453"/>
<dbReference type="Antibodypedia" id="13261">
    <property type="antibodies" value="113 antibodies from 28 providers"/>
</dbReference>
<dbReference type="DNASU" id="80907"/>
<dbReference type="Ensembl" id="ENSMUST00000034929.7">
    <property type="protein sequence ID" value="ENSMUSP00000034929.7"/>
    <property type="gene ID" value="ENSMUSG00000032370.9"/>
</dbReference>
<dbReference type="GeneID" id="80907"/>
<dbReference type="KEGG" id="mmu:80907"/>
<dbReference type="UCSC" id="uc009qfn.1">
    <property type="organism name" value="mouse"/>
</dbReference>
<dbReference type="AGR" id="MGI:1933395"/>
<dbReference type="CTD" id="114294"/>
<dbReference type="MGI" id="MGI:1933395">
    <property type="gene designation" value="Lactb"/>
</dbReference>
<dbReference type="VEuPathDB" id="HostDB:ENSMUSG00000032370"/>
<dbReference type="eggNOG" id="ENOG502QQBX">
    <property type="taxonomic scope" value="Eukaryota"/>
</dbReference>
<dbReference type="GeneTree" id="ENSGT00390000001062"/>
<dbReference type="HOGENOM" id="CLU_020027_6_0_1"/>
<dbReference type="InParanoid" id="Q9EP89"/>
<dbReference type="OMA" id="CCRQQRH"/>
<dbReference type="OrthoDB" id="5946976at2759"/>
<dbReference type="PhylomeDB" id="Q9EP89"/>
<dbReference type="TreeFam" id="TF315050"/>
<dbReference type="BioGRID-ORCS" id="80907">
    <property type="hits" value="2 hits in 76 CRISPR screens"/>
</dbReference>
<dbReference type="PRO" id="PR:Q9EP89"/>
<dbReference type="Proteomes" id="UP000000589">
    <property type="component" value="Chromosome 9"/>
</dbReference>
<dbReference type="RNAct" id="Q9EP89">
    <property type="molecule type" value="protein"/>
</dbReference>
<dbReference type="Bgee" id="ENSMUSG00000032370">
    <property type="expression patterns" value="Expressed in metanephric cortical collecting duct and 247 other cell types or tissues"/>
</dbReference>
<dbReference type="ExpressionAtlas" id="Q9EP89">
    <property type="expression patterns" value="baseline and differential"/>
</dbReference>
<dbReference type="GO" id="GO:0005829">
    <property type="term" value="C:cytosol"/>
    <property type="evidence" value="ECO:0007669"/>
    <property type="project" value="Ensembl"/>
</dbReference>
<dbReference type="GO" id="GO:0005739">
    <property type="term" value="C:mitochondrion"/>
    <property type="evidence" value="ECO:0007005"/>
    <property type="project" value="MGI"/>
</dbReference>
<dbReference type="GO" id="GO:0042802">
    <property type="term" value="F:identical protein binding"/>
    <property type="evidence" value="ECO:0007669"/>
    <property type="project" value="Ensembl"/>
</dbReference>
<dbReference type="GO" id="GO:0008233">
    <property type="term" value="F:peptidase activity"/>
    <property type="evidence" value="ECO:0000250"/>
    <property type="project" value="UniProtKB"/>
</dbReference>
<dbReference type="GO" id="GO:0006629">
    <property type="term" value="P:lipid metabolic process"/>
    <property type="evidence" value="ECO:0007669"/>
    <property type="project" value="UniProtKB-KW"/>
</dbReference>
<dbReference type="GO" id="GO:0006508">
    <property type="term" value="P:proteolysis"/>
    <property type="evidence" value="ECO:0000250"/>
    <property type="project" value="UniProtKB"/>
</dbReference>
<dbReference type="GO" id="GO:0019216">
    <property type="term" value="P:regulation of lipid metabolic process"/>
    <property type="evidence" value="ECO:0000250"/>
    <property type="project" value="UniProtKB"/>
</dbReference>
<dbReference type="FunFam" id="3.40.710.10:FF:000015">
    <property type="entry name" value="Serine beta-lactamase-like protein LACTB, mitochondrial"/>
    <property type="match status" value="1"/>
</dbReference>
<dbReference type="FunFam" id="3.40.710.10:FF:000016">
    <property type="entry name" value="serine beta-lactamase-like protein LACTB, mitochondrial"/>
    <property type="match status" value="1"/>
</dbReference>
<dbReference type="Gene3D" id="3.40.710.10">
    <property type="entry name" value="DD-peptidase/beta-lactamase superfamily"/>
    <property type="match status" value="2"/>
</dbReference>
<dbReference type="InterPro" id="IPR001466">
    <property type="entry name" value="Beta-lactam-related"/>
</dbReference>
<dbReference type="InterPro" id="IPR012338">
    <property type="entry name" value="Beta-lactam/transpept-like"/>
</dbReference>
<dbReference type="InterPro" id="IPR052794">
    <property type="entry name" value="Mito_Ser_Protease_LACTB"/>
</dbReference>
<dbReference type="PANTHER" id="PTHR46520">
    <property type="entry name" value="SERINE BETA-LACTAMASE-LIKE PROTEIN LACTB, MITOCHONDRIAL"/>
    <property type="match status" value="1"/>
</dbReference>
<dbReference type="PANTHER" id="PTHR46520:SF1">
    <property type="entry name" value="SERINE BETA-LACTAMASE-LIKE PROTEIN LACTB, MITOCHONDRIAL"/>
    <property type="match status" value="1"/>
</dbReference>
<dbReference type="Pfam" id="PF00144">
    <property type="entry name" value="Beta-lactamase"/>
    <property type="match status" value="2"/>
</dbReference>
<dbReference type="SUPFAM" id="SSF56601">
    <property type="entry name" value="beta-lactamase/transpeptidase-like"/>
    <property type="match status" value="1"/>
</dbReference>
<name>LACTB_MOUSE</name>
<organism>
    <name type="scientific">Mus musculus</name>
    <name type="common">Mouse</name>
    <dbReference type="NCBI Taxonomy" id="10090"/>
    <lineage>
        <taxon>Eukaryota</taxon>
        <taxon>Metazoa</taxon>
        <taxon>Chordata</taxon>
        <taxon>Craniata</taxon>
        <taxon>Vertebrata</taxon>
        <taxon>Euteleostomi</taxon>
        <taxon>Mammalia</taxon>
        <taxon>Eutheria</taxon>
        <taxon>Euarchontoglires</taxon>
        <taxon>Glires</taxon>
        <taxon>Rodentia</taxon>
        <taxon>Myomorpha</taxon>
        <taxon>Muroidea</taxon>
        <taxon>Muridae</taxon>
        <taxon>Murinae</taxon>
        <taxon>Mus</taxon>
        <taxon>Mus</taxon>
    </lineage>
</organism>
<reference key="1">
    <citation type="journal article" date="2001" name="Genomics">
        <title>Identification, genomic organization, and mRNA expression of LACTB, encoding a serine beta-lactamase-like protein with an amino-terminal transmembrane domain.</title>
        <authorList>
            <person name="Smith T.S."/>
            <person name="Southan C."/>
            <person name="Ellington K."/>
            <person name="Campbell D."/>
            <person name="Tew D.G."/>
            <person name="Debouck C."/>
        </authorList>
    </citation>
    <scope>NUCLEOTIDE SEQUENCE [GENOMIC DNA / MRNA]</scope>
    <scope>TISSUE SPECIFICITY</scope>
    <source>
        <strain>129/Sv</strain>
        <strain>BALB/cJ</strain>
    </source>
</reference>
<reference key="2">
    <citation type="journal article" date="2010" name="Cell">
        <title>A tissue-specific atlas of mouse protein phosphorylation and expression.</title>
        <authorList>
            <person name="Huttlin E.L."/>
            <person name="Jedrychowski M.P."/>
            <person name="Elias J.E."/>
            <person name="Goswami T."/>
            <person name="Rad R."/>
            <person name="Beausoleil S.A."/>
            <person name="Villen J."/>
            <person name="Haas W."/>
            <person name="Sowa M.E."/>
            <person name="Gygi S.P."/>
        </authorList>
    </citation>
    <scope>IDENTIFICATION BY MASS SPECTROMETRY [LARGE SCALE ANALYSIS]</scope>
    <source>
        <tissue>Brown adipose tissue</tissue>
        <tissue>Kidney</tissue>
        <tissue>Liver</tissue>
        <tissue>Testis</tissue>
    </source>
</reference>
<reference key="3">
    <citation type="journal article" date="2013" name="Mol. Cell">
        <title>SIRT5-mediated lysine desuccinylation impacts diverse metabolic pathways.</title>
        <authorList>
            <person name="Park J."/>
            <person name="Chen Y."/>
            <person name="Tishkoff D.X."/>
            <person name="Peng C."/>
            <person name="Tan M."/>
            <person name="Dai L."/>
            <person name="Xie Z."/>
            <person name="Zhang Y."/>
            <person name="Zwaans B.M."/>
            <person name="Skinner M.E."/>
            <person name="Lombard D.B."/>
            <person name="Zhao Y."/>
        </authorList>
    </citation>
    <scope>SUCCINYLATION [LARGE SCALE ANALYSIS] AT LYS-287 AND LYS-288</scope>
    <scope>IDENTIFICATION BY MASS SPECTROMETRY [LARGE SCALE ANALYSIS]</scope>
    <source>
        <tissue>Embryonic fibroblast</tissue>
        <tissue>Liver</tissue>
    </source>
</reference>
<reference key="4">
    <citation type="journal article" date="2013" name="Proc. Natl. Acad. Sci. U.S.A.">
        <title>Label-free quantitative proteomics of the lysine acetylome in mitochondria identifies substrates of SIRT3 in metabolic pathways.</title>
        <authorList>
            <person name="Rardin M.J."/>
            <person name="Newman J.C."/>
            <person name="Held J.M."/>
            <person name="Cusack M.P."/>
            <person name="Sorensen D.J."/>
            <person name="Li B."/>
            <person name="Schilling B."/>
            <person name="Mooney S.D."/>
            <person name="Kahn C.R."/>
            <person name="Verdin E."/>
            <person name="Gibson B.W."/>
        </authorList>
    </citation>
    <scope>ACETYLATION [LARGE SCALE ANALYSIS] AT LYS-301</scope>
    <scope>IDENTIFICATION BY MASS SPECTROMETRY [LARGE SCALE ANALYSIS]</scope>
    <source>
        <tissue>Liver</tissue>
    </source>
</reference>
<reference key="5">
    <citation type="journal article" date="2017" name="Nature">
        <title>LACTB is a tumour suppressor that modulates lipid metabolism and cell state.</title>
        <authorList>
            <person name="Keckesova Z."/>
            <person name="Donaher J.L."/>
            <person name="De Cock J."/>
            <person name="Freinkman E."/>
            <person name="Lingrell S."/>
            <person name="Bachovchin D.A."/>
            <person name="Bierie B."/>
            <person name="Tischler V."/>
            <person name="Noske A."/>
            <person name="Okondo M.C."/>
            <person name="Reinhardt F."/>
            <person name="Thiru P."/>
            <person name="Golub T.R."/>
            <person name="Vance J.E."/>
            <person name="Weinberg R.A."/>
        </authorList>
    </citation>
    <scope>FUNCTION</scope>
    <scope>INDUCTION</scope>
</reference>
<protein>
    <recommendedName>
        <fullName evidence="7">Serine beta-lactamase-like protein LACTB, mitochondrial</fullName>
        <ecNumber evidence="2">3.4.-.-</ecNumber>
    </recommendedName>
</protein>
<gene>
    <name evidence="8" type="primary">Lactb</name>
    <name type="synonym">Lact1</name>
</gene>
<keyword id="KW-0007">Acetylation</keyword>
<keyword id="KW-0378">Hydrolase</keyword>
<keyword id="KW-0443">Lipid metabolism</keyword>
<keyword id="KW-0496">Mitochondrion</keyword>
<keyword id="KW-0645">Protease</keyword>
<keyword id="KW-1185">Reference proteome</keyword>
<keyword id="KW-0809">Transit peptide</keyword>
<keyword id="KW-0043">Tumor suppressor</keyword>
<feature type="transit peptide" description="Mitochondrion" evidence="3">
    <location>
        <begin position="1"/>
        <end position="113"/>
    </location>
</feature>
<feature type="chain" id="PRO_0000195477" description="Serine beta-lactamase-like protein LACTB, mitochondrial">
    <location>
        <begin position="114"/>
        <end position="551"/>
    </location>
</feature>
<feature type="region of interest" description="Disordered" evidence="4">
    <location>
        <begin position="69"/>
        <end position="101"/>
    </location>
</feature>
<feature type="region of interest" description="Disordered" evidence="4">
    <location>
        <begin position="237"/>
        <end position="287"/>
    </location>
</feature>
<feature type="compositionally biased region" description="Basic and acidic residues" evidence="4">
    <location>
        <begin position="248"/>
        <end position="279"/>
    </location>
</feature>
<feature type="active site" description="Acyl-ester intermediate" evidence="1">
    <location>
        <position position="162"/>
    </location>
</feature>
<feature type="modified residue" description="N6-succinyllysine" evidence="10">
    <location>
        <position position="287"/>
    </location>
</feature>
<feature type="modified residue" description="N6-succinyllysine" evidence="10">
    <location>
        <position position="288"/>
    </location>
</feature>
<feature type="modified residue" description="N6-acetyllysine" evidence="9">
    <location>
        <position position="301"/>
    </location>
</feature>
<feature type="modified residue" description="N6-acetyllysine" evidence="2">
    <location>
        <position position="346"/>
    </location>
</feature>
<comment type="function">
    <text evidence="2 6">Mitochondrial serine protease that acts as a regulator of mitochondrial lipid metabolism (By similarity). Acts by decreasing protein levels of PISD, a mitochondrial enzyme that converts phosphatidylserine (PtdSer) to phosphatidylethanolamine (PtdEtn), thereby affecting mitochondrial lipid metabolism (By similarity). It is unclear whether it acts directly by mediating proteolysis of PISD or by mediating proteolysis of another lipid metabolism protein (By similarity). Acts as a tumor suppressor that has the ability to inhibit proliferation of multiple types of cancer cells: probably by promoting decreased levels of PISD, thereby affecting mitochondrial lipid metabolism (PubMed:28329758).</text>
</comment>
<comment type="subcellular location">
    <subcellularLocation>
        <location evidence="2">Mitochondrion</location>
    </subcellularLocation>
</comment>
<comment type="tissue specificity">
    <text evidence="5">Expressed predominantly in liver.</text>
</comment>
<comment type="induction">
    <text evidence="6">Down-regulated in a number of cancer cells.</text>
</comment>
<comment type="similarity">
    <text evidence="7">Belongs to the peptidase S12 family.</text>
</comment>
<accession>Q9EP89</accession>
<evidence type="ECO:0000250" key="1">
    <source>
        <dbReference type="UniProtKB" id="P15555"/>
    </source>
</evidence>
<evidence type="ECO:0000250" key="2">
    <source>
        <dbReference type="UniProtKB" id="P83111"/>
    </source>
</evidence>
<evidence type="ECO:0000255" key="3"/>
<evidence type="ECO:0000256" key="4">
    <source>
        <dbReference type="SAM" id="MobiDB-lite"/>
    </source>
</evidence>
<evidence type="ECO:0000269" key="5">
    <source>
    </source>
</evidence>
<evidence type="ECO:0000269" key="6">
    <source>
    </source>
</evidence>
<evidence type="ECO:0000305" key="7"/>
<evidence type="ECO:0000312" key="8">
    <source>
        <dbReference type="MGI" id="MGI:1933395"/>
    </source>
</evidence>
<evidence type="ECO:0007744" key="9">
    <source>
    </source>
</evidence>
<evidence type="ECO:0007744" key="10">
    <source>
    </source>
</evidence>
<sequence length="551" mass="60705">MYRLLSSVTARAAATAGPAWDGGRRGAHRRPGLPVLGLGWAGGLGLGLGLALGAKLVVGLRGAVPIQSPADPEASGTTELSHEQALSPGSPHTPAPPAARGFSRAIESSRDLLHRIKDEVGAPGIVVGVSVDGKEVWSEGLGYADVENRVPCKPETVMRIASISKSLTMVALAKLWEAGKLDLDLPVQHYVPEFPEKEYEGEKVSVTTRLLISHLSGIRHYEKDIKKVKEEKAYKALKMVKGTPPPSDQEKELKEKGGKNNEKSDAPKAKVEQDSEARCRSAKPGKKKNDFEQGELYLKEKFENSIESLRLFKNDPLFFKPGSQFLYSTFGYTLLAAIVERASGYKYLDYMQKIFHDLDMLTTVQEENEPVIYNRARFYVYNKKKRLVNTPYVDNSYKWAGGGFLSTVGDLLKFGNAMLYGYQVGQFKNSNENLLPGYLKPETMVMMWTPVPNTEMSWDKEGKYAMAWGVVEKKQTYGSCRKQRHYASHTGGAVGASSVLLVLPEELDSEAVNNKVPPRGIIVSIICNMQSVGLNSTALKIALEFDKDRAD</sequence>